<reference key="1">
    <citation type="journal article" date="1990" name="J. Biol. Chem.">
        <title>Organization and nucleotide sequence of a gene cluster coding for eight ribosomal proteins in the archaebacterium Halobacterium marismortui.</title>
        <authorList>
            <person name="Arndt E."/>
            <person name="Kroemer W."/>
            <person name="Hatakeyama T."/>
        </authorList>
    </citation>
    <scope>NUCLEOTIDE SEQUENCE [GENOMIC DNA]</scope>
</reference>
<reference key="2">
    <citation type="journal article" date="2004" name="Genome Res.">
        <title>Genome sequence of Haloarcula marismortui: a halophilic archaeon from the Dead Sea.</title>
        <authorList>
            <person name="Baliga N.S."/>
            <person name="Bonneau R."/>
            <person name="Facciotti M.T."/>
            <person name="Pan M."/>
            <person name="Glusman G."/>
            <person name="Deutsch E.W."/>
            <person name="Shannon P."/>
            <person name="Chiu Y."/>
            <person name="Weng R.S."/>
            <person name="Gan R.R."/>
            <person name="Hung P."/>
            <person name="Date S.V."/>
            <person name="Marcotte E."/>
            <person name="Hood L."/>
            <person name="Ng W.V."/>
        </authorList>
    </citation>
    <scope>NUCLEOTIDE SEQUENCE [LARGE SCALE GENOMIC DNA]</scope>
    <source>
        <strain>ATCC 43049 / DSM 3752 / JCM 8966 / VKM B-1809</strain>
    </source>
</reference>
<reference key="3">
    <citation type="journal article" date="1988" name="FEBS Lett.">
        <title>The primary structures of ribosomal proteins L16, L23 and L33 from the archaebacterium Halobacterium marismortui.</title>
        <authorList>
            <person name="Hatakeyama T."/>
            <person name="Hatakeyama T."/>
            <person name="Kimura M."/>
        </authorList>
    </citation>
    <scope>PROTEIN SEQUENCE OF 2-70</scope>
</reference>
<reference key="4">
    <citation type="journal article" date="1990" name="FEBS Lett.">
        <title>Nucleotide sequence of four genes encoding ribosomal proteins from the 'S10 and spectinomycin' operon equivalent region in the archaebacterium Halobacterium marismortui.</title>
        <authorList>
            <person name="Arndt E."/>
        </authorList>
    </citation>
    <scope>NUCLEOTIDE SEQUENCE [GENOMIC DNA] OF 60-71</scope>
</reference>
<reference key="5">
    <citation type="journal article" date="2000" name="Science">
        <title>The complete atomic structure of the large ribosomal subunit at 2.4 A resolution.</title>
        <authorList>
            <person name="Ban N."/>
            <person name="Nissen P."/>
            <person name="Hansen J."/>
            <person name="Moore P.B."/>
            <person name="Steitz T.A."/>
        </authorList>
    </citation>
    <scope>X-RAY CRYSTALLOGRAPHY (2.4 ANGSTROMS) OF THE 50S SUBUNIT</scope>
    <source>
        <strain>ATCC 43049 / DSM 3752 / JCM 8966 / VKM B-1809</strain>
    </source>
</reference>
<reference key="6">
    <citation type="journal article" date="2000" name="Science">
        <title>The structural basis of ribosome activity in peptide bond synthesis.</title>
        <authorList>
            <person name="Nissen P."/>
            <person name="Hansen J."/>
            <person name="Ban N."/>
            <person name="Moore P.B."/>
            <person name="Steitz T.A."/>
        </authorList>
    </citation>
    <scope>X-RAY CRYSTALLOGRAPHY (3.0 ANGSTROMS) OF THE 50S SUBUNIT</scope>
    <source>
        <strain>ATCC 43049 / DSM 3752 / JCM 8966 / VKM B-1809</strain>
    </source>
</reference>
<reference key="7">
    <citation type="journal article" date="2002" name="Nat. Struct. Biol.">
        <title>A pre-translocational intermediate in protein synthesis observed in crystals of enzymatically active 50S subunits.</title>
        <authorList>
            <person name="Schmeing T.M."/>
            <person name="Seila A.C."/>
            <person name="Hansen J.L."/>
            <person name="Freeborn B."/>
            <person name="Soukup J.K."/>
            <person name="Scaringe S.A."/>
            <person name="Strobel S.A."/>
            <person name="Moore P.B."/>
            <person name="Steitz T.A."/>
        </authorList>
    </citation>
    <scope>X-RAY CRYSTALLOGRAPHY (3.1 ANGSTROMS) OF THE 50S SUBUNIT</scope>
    <source>
        <strain>ATCC 43049 / DSM 3752 / JCM 8966 / VKM B-1809</strain>
    </source>
</reference>
<reference key="8">
    <citation type="journal article" date="2001" name="EMBO J.">
        <title>The kink-turn: a new RNA secondary structure motif.</title>
        <authorList>
            <person name="Klein D.J."/>
            <person name="Schmeing T.M."/>
            <person name="Moore P.B."/>
            <person name="Steitz T.A."/>
        </authorList>
    </citation>
    <scope>X-RAY CRYSTALLOGRAPHY (2.4 ANGSTROMS) OF THE 50S SUBUNIT</scope>
    <source>
        <strain>ATCC 43049 / DSM 3752 / JCM 8966 / VKM B-1809</strain>
    </source>
</reference>
<reference key="9">
    <citation type="journal article" date="2002" name="Mol. Cell">
        <title>The structures of four macrolide antibiotics bound to the large ribosomal subunit.</title>
        <authorList>
            <person name="Hansen J.L."/>
            <person name="Ippolito J.A."/>
            <person name="Ban N."/>
            <person name="Nissen P."/>
            <person name="Moore P.B."/>
            <person name="Steitz T.A."/>
        </authorList>
    </citation>
    <scope>X-RAY CRYSTALLOGRAPHY (3.0 ANGSTROMS) OF THE 50S SUBUNIT IN COMPLEX WITH FOUR MACROLIDE ANTIBIOTICS</scope>
    <source>
        <strain>ATCC 43049 / DSM 3752 / JCM 8966 / VKM B-1809</strain>
    </source>
</reference>
<reference key="10">
    <citation type="journal article" date="2002" name="Proc. Natl. Acad. Sci. U.S.A.">
        <title>Structural insights into peptide bond formation.</title>
        <authorList>
            <person name="Hansen J.L."/>
            <person name="Schmeing T.M."/>
            <person name="Moore P.B."/>
            <person name="Steitz T.A."/>
        </authorList>
    </citation>
    <scope>X-RAY CRYSTALLOGRAPHY (2.8 ANGSTROMS) OF THE 50S SUBUNIT</scope>
    <source>
        <strain>ATCC 43049 / DSM 3752 / JCM 8966 / VKM B-1809</strain>
    </source>
</reference>
<reference key="11">
    <citation type="journal article" date="2003" name="J. Mol. Biol.">
        <title>Structures of five antibiotics bound at the peptidyl transferase center of the large ribosomal subunit.</title>
        <authorList>
            <person name="Hansen J.L."/>
            <person name="Moore P.B."/>
            <person name="Steitz T.A."/>
        </authorList>
    </citation>
    <scope>X-RAY CRYSTALLOGRAPHY (3.0 ANGSTROMS) OF THE 50S SUBUNIT IN COMPLEX WITH FIVE ANTIBIOTICS AT THE PEPTIDYL TRANSFERASE CENTER</scope>
    <source>
        <strain>ATCC 43049 / DSM 3752 / JCM 8966 / VKM B-1809</strain>
    </source>
</reference>
<reference key="12">
    <citation type="journal article" date="2003" name="RNA">
        <title>Structures of deacylated tRNA mimics bound to the E site of the large ribosomal subunit.</title>
        <authorList>
            <person name="Schmeing T.M."/>
            <person name="Moore P.B."/>
            <person name="Steitz T.A."/>
        </authorList>
    </citation>
    <scope>X-RAY CRYSTALLOGRAPHY (2.9 ANGSTROMS) OF THE 50S SUBUNIT WITH TWO DIFFERENT E SITE SUBSTRATES</scope>
</reference>
<reference key="13">
    <citation type="journal article" date="2013" name="Acta Crystallogr. D">
        <title>Revisiting the Haloarcula marismortui 50S ribosomal subunit model.</title>
        <authorList>
            <person name="Gabdulkhakov A."/>
            <person name="Nikonov S."/>
            <person name="Garber M."/>
        </authorList>
    </citation>
    <scope>X-RAY CRYSTALLOGRAPHY (2.4 ANGSTROMS) OF THE 50S SUBUNIT</scope>
</reference>
<comment type="function">
    <text>Stabilizes the tertiary rRNA structure within the 23S rRNA domain (domain I) to which it binds. Located at the polypeptide exit tunnel on the outside of the subunit.</text>
</comment>
<comment type="subunit">
    <text evidence="1 2">Part of the 50S ribosomal subunit. Interacts with protein L23.</text>
</comment>
<comment type="similarity">
    <text evidence="4">Belongs to the universal ribosomal protein uL29 family.</text>
</comment>
<keyword id="KW-0002">3D-structure</keyword>
<keyword id="KW-0903">Direct protein sequencing</keyword>
<keyword id="KW-1185">Reference proteome</keyword>
<keyword id="KW-0687">Ribonucleoprotein</keyword>
<keyword id="KW-0689">Ribosomal protein</keyword>
<keyword id="KW-0694">RNA-binding</keyword>
<keyword id="KW-0699">rRNA-binding</keyword>
<feature type="initiator methionine" description="Removed" evidence="3">
    <location>
        <position position="1"/>
    </location>
</feature>
<feature type="chain" id="PRO_0000130508" description="Large ribosomal subunit protein uL29">
    <location>
        <begin position="2"/>
        <end position="71"/>
    </location>
</feature>
<feature type="helix" evidence="5">
    <location>
        <begin position="6"/>
        <end position="11"/>
    </location>
</feature>
<feature type="helix" evidence="5">
    <location>
        <begin position="14"/>
        <end position="36"/>
    </location>
</feature>
<feature type="helix" evidence="5">
    <location>
        <begin position="44"/>
        <end position="64"/>
    </location>
</feature>
<name>RL29_HALMA</name>
<organism>
    <name type="scientific">Haloarcula marismortui (strain ATCC 43049 / DSM 3752 / JCM 8966 / VKM B-1809)</name>
    <name type="common">Halobacterium marismortui</name>
    <dbReference type="NCBI Taxonomy" id="272569"/>
    <lineage>
        <taxon>Archaea</taxon>
        <taxon>Methanobacteriati</taxon>
        <taxon>Methanobacteriota</taxon>
        <taxon>Stenosarchaea group</taxon>
        <taxon>Halobacteria</taxon>
        <taxon>Halobacteriales</taxon>
        <taxon>Haloarculaceae</taxon>
        <taxon>Haloarcula</taxon>
    </lineage>
</organism>
<gene>
    <name type="primary">rpl29</name>
    <name type="ordered locus">rrnAC1604</name>
</gene>
<evidence type="ECO:0000269" key="1">
    <source>
    </source>
</evidence>
<evidence type="ECO:0000269" key="2">
    <source>
    </source>
</evidence>
<evidence type="ECO:0000269" key="3">
    <source>
    </source>
</evidence>
<evidence type="ECO:0000305" key="4"/>
<evidence type="ECO:0007829" key="5">
    <source>
        <dbReference type="PDB" id="1VQ8"/>
    </source>
</evidence>
<protein>
    <recommendedName>
        <fullName evidence="4">Large ribosomal subunit protein uL29</fullName>
    </recommendedName>
    <alternativeName>
        <fullName>50S ribosomal protein L29</fullName>
    </alternativeName>
    <alternativeName>
        <fullName>Hl33</fullName>
    </alternativeName>
    <alternativeName>
        <fullName>Hmal29</fullName>
    </alternativeName>
</protein>
<accession>P10971</accession>
<accession>P22526</accession>
<accession>Q5V1T1</accession>
<dbReference type="EMBL" id="J05222">
    <property type="protein sequence ID" value="AAA86866.1"/>
    <property type="molecule type" value="Genomic_DNA"/>
</dbReference>
<dbReference type="EMBL" id="AY596297">
    <property type="protein sequence ID" value="AAV46521.1"/>
    <property type="molecule type" value="Genomic_DNA"/>
</dbReference>
<dbReference type="EMBL" id="X55311">
    <property type="protein sequence ID" value="CAA39015.1"/>
    <property type="molecule type" value="Genomic_DNA"/>
</dbReference>
<dbReference type="PIR" id="A35064">
    <property type="entry name" value="R5HS29"/>
</dbReference>
<dbReference type="PIR" id="T46794">
    <property type="entry name" value="T46794"/>
</dbReference>
<dbReference type="PDB" id="1FFK">
    <property type="method" value="X-ray"/>
    <property type="resolution" value="2.40 A"/>
    <property type="chains" value="S=2-71"/>
</dbReference>
<dbReference type="PDB" id="1JJ2">
    <property type="method" value="X-ray"/>
    <property type="resolution" value="2.40 A"/>
    <property type="chains" value="U=2-71"/>
</dbReference>
<dbReference type="PDB" id="1K73">
    <property type="method" value="X-ray"/>
    <property type="resolution" value="3.01 A"/>
    <property type="chains" value="W=2-71"/>
</dbReference>
<dbReference type="PDB" id="1K8A">
    <property type="method" value="X-ray"/>
    <property type="resolution" value="3.00 A"/>
    <property type="chains" value="W=2-71"/>
</dbReference>
<dbReference type="PDB" id="1K9M">
    <property type="method" value="X-ray"/>
    <property type="resolution" value="3.00 A"/>
    <property type="chains" value="W=2-71"/>
</dbReference>
<dbReference type="PDB" id="1KC8">
    <property type="method" value="X-ray"/>
    <property type="resolution" value="3.01 A"/>
    <property type="chains" value="W=2-71"/>
</dbReference>
<dbReference type="PDB" id="1KD1">
    <property type="method" value="X-ray"/>
    <property type="resolution" value="3.00 A"/>
    <property type="chains" value="W=2-71"/>
</dbReference>
<dbReference type="PDB" id="1KQS">
    <property type="method" value="X-ray"/>
    <property type="resolution" value="3.10 A"/>
    <property type="chains" value="U=2-71"/>
</dbReference>
<dbReference type="PDB" id="1M1K">
    <property type="method" value="X-ray"/>
    <property type="resolution" value="3.20 A"/>
    <property type="chains" value="W=2-71"/>
</dbReference>
<dbReference type="PDB" id="1M90">
    <property type="method" value="X-ray"/>
    <property type="resolution" value="2.80 A"/>
    <property type="chains" value="W=2-71"/>
</dbReference>
<dbReference type="PDB" id="1ML5">
    <property type="method" value="EM"/>
    <property type="resolution" value="14.00 A"/>
    <property type="chains" value="w=2-71"/>
</dbReference>
<dbReference type="PDB" id="1N8R">
    <property type="method" value="X-ray"/>
    <property type="resolution" value="3.00 A"/>
    <property type="chains" value="W=2-71"/>
</dbReference>
<dbReference type="PDB" id="1NJI">
    <property type="method" value="X-ray"/>
    <property type="resolution" value="3.00 A"/>
    <property type="chains" value="W=2-71"/>
</dbReference>
<dbReference type="PDB" id="1Q7Y">
    <property type="method" value="X-ray"/>
    <property type="resolution" value="3.20 A"/>
    <property type="chains" value="W=2-71"/>
</dbReference>
<dbReference type="PDB" id="1Q81">
    <property type="method" value="X-ray"/>
    <property type="resolution" value="2.95 A"/>
    <property type="chains" value="W=2-71"/>
</dbReference>
<dbReference type="PDB" id="1Q82">
    <property type="method" value="X-ray"/>
    <property type="resolution" value="2.98 A"/>
    <property type="chains" value="W=2-71"/>
</dbReference>
<dbReference type="PDB" id="1Q86">
    <property type="method" value="X-ray"/>
    <property type="resolution" value="3.00 A"/>
    <property type="chains" value="W=2-71"/>
</dbReference>
<dbReference type="PDB" id="1QVF">
    <property type="method" value="X-ray"/>
    <property type="resolution" value="3.10 A"/>
    <property type="chains" value="U=2-71"/>
</dbReference>
<dbReference type="PDB" id="1QVG">
    <property type="method" value="X-ray"/>
    <property type="resolution" value="2.90 A"/>
    <property type="chains" value="U=2-71"/>
</dbReference>
<dbReference type="PDB" id="1S72">
    <property type="method" value="X-ray"/>
    <property type="resolution" value="2.40 A"/>
    <property type="chains" value="V=1-71"/>
</dbReference>
<dbReference type="PDB" id="1VQ4">
    <property type="method" value="X-ray"/>
    <property type="resolution" value="2.70 A"/>
    <property type="chains" value="V=1-71"/>
</dbReference>
<dbReference type="PDB" id="1VQ5">
    <property type="method" value="X-ray"/>
    <property type="resolution" value="2.60 A"/>
    <property type="chains" value="V=1-71"/>
</dbReference>
<dbReference type="PDB" id="1VQ6">
    <property type="method" value="X-ray"/>
    <property type="resolution" value="2.70 A"/>
    <property type="chains" value="V=1-71"/>
</dbReference>
<dbReference type="PDB" id="1VQ7">
    <property type="method" value="X-ray"/>
    <property type="resolution" value="2.50 A"/>
    <property type="chains" value="V=1-71"/>
</dbReference>
<dbReference type="PDB" id="1VQ8">
    <property type="method" value="X-ray"/>
    <property type="resolution" value="2.20 A"/>
    <property type="chains" value="V=1-71"/>
</dbReference>
<dbReference type="PDB" id="1VQ9">
    <property type="method" value="X-ray"/>
    <property type="resolution" value="2.40 A"/>
    <property type="chains" value="V=1-71"/>
</dbReference>
<dbReference type="PDB" id="1VQK">
    <property type="method" value="X-ray"/>
    <property type="resolution" value="2.30 A"/>
    <property type="chains" value="V=1-71"/>
</dbReference>
<dbReference type="PDB" id="1VQL">
    <property type="method" value="X-ray"/>
    <property type="resolution" value="2.30 A"/>
    <property type="chains" value="V=1-71"/>
</dbReference>
<dbReference type="PDB" id="1VQM">
    <property type="method" value="X-ray"/>
    <property type="resolution" value="2.30 A"/>
    <property type="chains" value="V=1-71"/>
</dbReference>
<dbReference type="PDB" id="1VQN">
    <property type="method" value="X-ray"/>
    <property type="resolution" value="2.40 A"/>
    <property type="chains" value="V=1-71"/>
</dbReference>
<dbReference type="PDB" id="1VQO">
    <property type="method" value="X-ray"/>
    <property type="resolution" value="2.20 A"/>
    <property type="chains" value="V=1-71"/>
</dbReference>
<dbReference type="PDB" id="1VQP">
    <property type="method" value="X-ray"/>
    <property type="resolution" value="2.25 A"/>
    <property type="chains" value="V=1-71"/>
</dbReference>
<dbReference type="PDB" id="1W2B">
    <property type="method" value="X-ray"/>
    <property type="resolution" value="3.50 A"/>
    <property type="chains" value="U=2-71"/>
</dbReference>
<dbReference type="PDB" id="1YHQ">
    <property type="method" value="X-ray"/>
    <property type="resolution" value="2.40 A"/>
    <property type="chains" value="V=1-71"/>
</dbReference>
<dbReference type="PDB" id="1YI2">
    <property type="method" value="X-ray"/>
    <property type="resolution" value="2.65 A"/>
    <property type="chains" value="V=1-71"/>
</dbReference>
<dbReference type="PDB" id="1YIJ">
    <property type="method" value="X-ray"/>
    <property type="resolution" value="2.60 A"/>
    <property type="chains" value="V=1-71"/>
</dbReference>
<dbReference type="PDB" id="1YIT">
    <property type="method" value="X-ray"/>
    <property type="resolution" value="2.80 A"/>
    <property type="chains" value="V=1-71"/>
</dbReference>
<dbReference type="PDB" id="1YJ9">
    <property type="method" value="X-ray"/>
    <property type="resolution" value="2.90 A"/>
    <property type="chains" value="V=1-71"/>
</dbReference>
<dbReference type="PDB" id="1YJN">
    <property type="method" value="X-ray"/>
    <property type="resolution" value="3.00 A"/>
    <property type="chains" value="V=1-71"/>
</dbReference>
<dbReference type="PDB" id="1YJW">
    <property type="method" value="X-ray"/>
    <property type="resolution" value="2.90 A"/>
    <property type="chains" value="V=1-71"/>
</dbReference>
<dbReference type="PDB" id="2OTJ">
    <property type="method" value="X-ray"/>
    <property type="resolution" value="2.90 A"/>
    <property type="chains" value="V=1-71"/>
</dbReference>
<dbReference type="PDB" id="2OTL">
    <property type="method" value="X-ray"/>
    <property type="resolution" value="2.70 A"/>
    <property type="chains" value="V=1-71"/>
</dbReference>
<dbReference type="PDB" id="2QA4">
    <property type="method" value="X-ray"/>
    <property type="resolution" value="3.00 A"/>
    <property type="chains" value="V=1-71"/>
</dbReference>
<dbReference type="PDB" id="2QEX">
    <property type="method" value="X-ray"/>
    <property type="resolution" value="2.90 A"/>
    <property type="chains" value="V=1-71"/>
</dbReference>
<dbReference type="PDB" id="3CC2">
    <property type="method" value="X-ray"/>
    <property type="resolution" value="2.40 A"/>
    <property type="chains" value="V=1-71"/>
</dbReference>
<dbReference type="PDB" id="3CC4">
    <property type="method" value="X-ray"/>
    <property type="resolution" value="2.70 A"/>
    <property type="chains" value="V=1-71"/>
</dbReference>
<dbReference type="PDB" id="3CC7">
    <property type="method" value="X-ray"/>
    <property type="resolution" value="2.70 A"/>
    <property type="chains" value="V=1-71"/>
</dbReference>
<dbReference type="PDB" id="3CCE">
    <property type="method" value="X-ray"/>
    <property type="resolution" value="2.75 A"/>
    <property type="chains" value="V=1-71"/>
</dbReference>
<dbReference type="PDB" id="3CCJ">
    <property type="method" value="X-ray"/>
    <property type="resolution" value="2.70 A"/>
    <property type="chains" value="V=1-71"/>
</dbReference>
<dbReference type="PDB" id="3CCL">
    <property type="method" value="X-ray"/>
    <property type="resolution" value="2.90 A"/>
    <property type="chains" value="V=1-71"/>
</dbReference>
<dbReference type="PDB" id="3CCM">
    <property type="method" value="X-ray"/>
    <property type="resolution" value="2.55 A"/>
    <property type="chains" value="V=1-71"/>
</dbReference>
<dbReference type="PDB" id="3CCQ">
    <property type="method" value="X-ray"/>
    <property type="resolution" value="2.90 A"/>
    <property type="chains" value="V=1-71"/>
</dbReference>
<dbReference type="PDB" id="3CCR">
    <property type="method" value="X-ray"/>
    <property type="resolution" value="3.00 A"/>
    <property type="chains" value="V=1-71"/>
</dbReference>
<dbReference type="PDB" id="3CCS">
    <property type="method" value="X-ray"/>
    <property type="resolution" value="2.95 A"/>
    <property type="chains" value="V=1-71"/>
</dbReference>
<dbReference type="PDB" id="3CCU">
    <property type="method" value="X-ray"/>
    <property type="resolution" value="2.80 A"/>
    <property type="chains" value="V=1-71"/>
</dbReference>
<dbReference type="PDB" id="3CCV">
    <property type="method" value="X-ray"/>
    <property type="resolution" value="2.90 A"/>
    <property type="chains" value="V=1-71"/>
</dbReference>
<dbReference type="PDB" id="3CD6">
    <property type="method" value="X-ray"/>
    <property type="resolution" value="2.75 A"/>
    <property type="chains" value="V=1-71"/>
</dbReference>
<dbReference type="PDB" id="3CMA">
    <property type="method" value="X-ray"/>
    <property type="resolution" value="2.80 A"/>
    <property type="chains" value="V=1-71"/>
</dbReference>
<dbReference type="PDB" id="3CME">
    <property type="method" value="X-ray"/>
    <property type="resolution" value="2.95 A"/>
    <property type="chains" value="V=1-71"/>
</dbReference>
<dbReference type="PDB" id="3CPW">
    <property type="method" value="X-ray"/>
    <property type="resolution" value="2.70 A"/>
    <property type="chains" value="U=1-71"/>
</dbReference>
<dbReference type="PDB" id="3CXC">
    <property type="method" value="X-ray"/>
    <property type="resolution" value="3.00 A"/>
    <property type="chains" value="U=2-71"/>
</dbReference>
<dbReference type="PDB" id="3G4S">
    <property type="method" value="X-ray"/>
    <property type="resolution" value="3.20 A"/>
    <property type="chains" value="V=2-66"/>
</dbReference>
<dbReference type="PDB" id="3G6E">
    <property type="method" value="X-ray"/>
    <property type="resolution" value="2.70 A"/>
    <property type="chains" value="V=2-66"/>
</dbReference>
<dbReference type="PDB" id="3G71">
    <property type="method" value="X-ray"/>
    <property type="resolution" value="2.85 A"/>
    <property type="chains" value="V=2-66"/>
</dbReference>
<dbReference type="PDB" id="3I55">
    <property type="method" value="X-ray"/>
    <property type="resolution" value="3.11 A"/>
    <property type="chains" value="V=1-71"/>
</dbReference>
<dbReference type="PDB" id="3I56">
    <property type="method" value="X-ray"/>
    <property type="resolution" value="2.90 A"/>
    <property type="chains" value="V=1-71"/>
</dbReference>
<dbReference type="PDB" id="3OW2">
    <property type="method" value="X-ray"/>
    <property type="resolution" value="2.70 A"/>
    <property type="chains" value="U=2-66"/>
</dbReference>
<dbReference type="PDB" id="4ADX">
    <property type="method" value="EM"/>
    <property type="resolution" value="6.60 A"/>
    <property type="chains" value="V=1-71"/>
</dbReference>
<dbReference type="PDB" id="4V42">
    <property type="method" value="X-ray"/>
    <property type="resolution" value="5.50 A"/>
    <property type="chains" value="BW=2-71"/>
</dbReference>
<dbReference type="PDB" id="4V4R">
    <property type="method" value="X-ray"/>
    <property type="resolution" value="5.90 A"/>
    <property type="chains" value="2=2-71"/>
</dbReference>
<dbReference type="PDB" id="4V4S">
    <property type="method" value="X-ray"/>
    <property type="resolution" value="6.76 A"/>
    <property type="chains" value="2=2-71"/>
</dbReference>
<dbReference type="PDB" id="4V4T">
    <property type="method" value="X-ray"/>
    <property type="resolution" value="6.46 A"/>
    <property type="chains" value="2=2-71"/>
</dbReference>
<dbReference type="PDB" id="4V9F">
    <property type="method" value="X-ray"/>
    <property type="resolution" value="2.40 A"/>
    <property type="chains" value="V=1-71"/>
</dbReference>
<dbReference type="PDBsum" id="1FFK"/>
<dbReference type="PDBsum" id="1JJ2"/>
<dbReference type="PDBsum" id="1K73"/>
<dbReference type="PDBsum" id="1K8A"/>
<dbReference type="PDBsum" id="1K9M"/>
<dbReference type="PDBsum" id="1KC8"/>
<dbReference type="PDBsum" id="1KD1"/>
<dbReference type="PDBsum" id="1KQS"/>
<dbReference type="PDBsum" id="1M1K"/>
<dbReference type="PDBsum" id="1M90"/>
<dbReference type="PDBsum" id="1ML5"/>
<dbReference type="PDBsum" id="1N8R"/>
<dbReference type="PDBsum" id="1NJI"/>
<dbReference type="PDBsum" id="1Q7Y"/>
<dbReference type="PDBsum" id="1Q81"/>
<dbReference type="PDBsum" id="1Q82"/>
<dbReference type="PDBsum" id="1Q86"/>
<dbReference type="PDBsum" id="1QVF"/>
<dbReference type="PDBsum" id="1QVG"/>
<dbReference type="PDBsum" id="1S72"/>
<dbReference type="PDBsum" id="1VQ4"/>
<dbReference type="PDBsum" id="1VQ5"/>
<dbReference type="PDBsum" id="1VQ6"/>
<dbReference type="PDBsum" id="1VQ7"/>
<dbReference type="PDBsum" id="1VQ8"/>
<dbReference type="PDBsum" id="1VQ9"/>
<dbReference type="PDBsum" id="1VQK"/>
<dbReference type="PDBsum" id="1VQL"/>
<dbReference type="PDBsum" id="1VQM"/>
<dbReference type="PDBsum" id="1VQN"/>
<dbReference type="PDBsum" id="1VQO"/>
<dbReference type="PDBsum" id="1VQP"/>
<dbReference type="PDBsum" id="1W2B"/>
<dbReference type="PDBsum" id="1YHQ"/>
<dbReference type="PDBsum" id="1YI2"/>
<dbReference type="PDBsum" id="1YIJ"/>
<dbReference type="PDBsum" id="1YIT"/>
<dbReference type="PDBsum" id="1YJ9"/>
<dbReference type="PDBsum" id="1YJN"/>
<dbReference type="PDBsum" id="1YJW"/>
<dbReference type="PDBsum" id="2OTJ"/>
<dbReference type="PDBsum" id="2OTL"/>
<dbReference type="PDBsum" id="2QA4"/>
<dbReference type="PDBsum" id="2QEX"/>
<dbReference type="PDBsum" id="3CC2"/>
<dbReference type="PDBsum" id="3CC4"/>
<dbReference type="PDBsum" id="3CC7"/>
<dbReference type="PDBsum" id="3CCE"/>
<dbReference type="PDBsum" id="3CCJ"/>
<dbReference type="PDBsum" id="3CCL"/>
<dbReference type="PDBsum" id="3CCM"/>
<dbReference type="PDBsum" id="3CCQ"/>
<dbReference type="PDBsum" id="3CCR"/>
<dbReference type="PDBsum" id="3CCS"/>
<dbReference type="PDBsum" id="3CCU"/>
<dbReference type="PDBsum" id="3CCV"/>
<dbReference type="PDBsum" id="3CD6"/>
<dbReference type="PDBsum" id="3CMA"/>
<dbReference type="PDBsum" id="3CME"/>
<dbReference type="PDBsum" id="3CPW"/>
<dbReference type="PDBsum" id="3CXC"/>
<dbReference type="PDBsum" id="3G4S"/>
<dbReference type="PDBsum" id="3G6E"/>
<dbReference type="PDBsum" id="3G71"/>
<dbReference type="PDBsum" id="3I55"/>
<dbReference type="PDBsum" id="3I56"/>
<dbReference type="PDBsum" id="3OW2"/>
<dbReference type="PDBsum" id="4ADX"/>
<dbReference type="PDBsum" id="4V42"/>
<dbReference type="PDBsum" id="4V4R"/>
<dbReference type="PDBsum" id="4V4S"/>
<dbReference type="PDBsum" id="4V4T"/>
<dbReference type="PDBsum" id="4V9F"/>
<dbReference type="SMR" id="P10971"/>
<dbReference type="IntAct" id="P10971">
    <property type="interactions" value="3"/>
</dbReference>
<dbReference type="STRING" id="272569.rrnAC1604"/>
<dbReference type="PaxDb" id="272569-rrnAC1604"/>
<dbReference type="EnsemblBacteria" id="AAV46521">
    <property type="protein sequence ID" value="AAV46521"/>
    <property type="gene ID" value="rrnAC1604"/>
</dbReference>
<dbReference type="KEGG" id="hma:rrnAC1604"/>
<dbReference type="PATRIC" id="fig|272569.17.peg.2294"/>
<dbReference type="eggNOG" id="arCOG00785">
    <property type="taxonomic scope" value="Archaea"/>
</dbReference>
<dbReference type="HOGENOM" id="CLU_158491_2_2_2"/>
<dbReference type="EvolutionaryTrace" id="P10971"/>
<dbReference type="Proteomes" id="UP000001169">
    <property type="component" value="Chromosome I"/>
</dbReference>
<dbReference type="GO" id="GO:0022625">
    <property type="term" value="C:cytosolic large ribosomal subunit"/>
    <property type="evidence" value="ECO:0007669"/>
    <property type="project" value="TreeGrafter"/>
</dbReference>
<dbReference type="GO" id="GO:0019843">
    <property type="term" value="F:rRNA binding"/>
    <property type="evidence" value="ECO:0007669"/>
    <property type="project" value="UniProtKB-KW"/>
</dbReference>
<dbReference type="GO" id="GO:0003735">
    <property type="term" value="F:structural constituent of ribosome"/>
    <property type="evidence" value="ECO:0007669"/>
    <property type="project" value="InterPro"/>
</dbReference>
<dbReference type="GO" id="GO:0006412">
    <property type="term" value="P:translation"/>
    <property type="evidence" value="ECO:0007669"/>
    <property type="project" value="UniProtKB-UniRule"/>
</dbReference>
<dbReference type="CDD" id="cd00427">
    <property type="entry name" value="Ribosomal_L29_HIP"/>
    <property type="match status" value="1"/>
</dbReference>
<dbReference type="FunFam" id="1.10.287.310:FF:000001">
    <property type="entry name" value="50S ribosomal protein L29"/>
    <property type="match status" value="1"/>
</dbReference>
<dbReference type="Gene3D" id="1.10.287.310">
    <property type="match status" value="1"/>
</dbReference>
<dbReference type="HAMAP" id="MF_00374">
    <property type="entry name" value="Ribosomal_uL29"/>
    <property type="match status" value="1"/>
</dbReference>
<dbReference type="InterPro" id="IPR050063">
    <property type="entry name" value="Ribosomal_protein_uL29"/>
</dbReference>
<dbReference type="InterPro" id="IPR001854">
    <property type="entry name" value="Ribosomal_uL29"/>
</dbReference>
<dbReference type="InterPro" id="IPR018254">
    <property type="entry name" value="Ribosomal_uL29_CS"/>
</dbReference>
<dbReference type="InterPro" id="IPR036049">
    <property type="entry name" value="Ribosomal_uL29_sf"/>
</dbReference>
<dbReference type="NCBIfam" id="TIGR00012">
    <property type="entry name" value="L29"/>
    <property type="match status" value="1"/>
</dbReference>
<dbReference type="PANTHER" id="PTHR10916">
    <property type="entry name" value="60S RIBOSOMAL PROTEIN L35/50S RIBOSOMAL PROTEIN L29"/>
    <property type="match status" value="1"/>
</dbReference>
<dbReference type="PANTHER" id="PTHR10916:SF0">
    <property type="entry name" value="LARGE RIBOSOMAL SUBUNIT PROTEIN UL29C"/>
    <property type="match status" value="1"/>
</dbReference>
<dbReference type="Pfam" id="PF00831">
    <property type="entry name" value="Ribosomal_L29"/>
    <property type="match status" value="1"/>
</dbReference>
<dbReference type="SUPFAM" id="SSF46561">
    <property type="entry name" value="Ribosomal protein L29 (L29p)"/>
    <property type="match status" value="1"/>
</dbReference>
<dbReference type="PROSITE" id="PS00579">
    <property type="entry name" value="RIBOSOMAL_L29"/>
    <property type="match status" value="1"/>
</dbReference>
<sequence length="71" mass="7879">MTVLHVQEIRDMTPAEREAELDDLKTELLNARAVQAAGGAPENPGRIKELRKAIARIKTIQGEEGDLQENE</sequence>
<proteinExistence type="evidence at protein level"/>